<keyword id="KW-0002">3D-structure</keyword>
<keyword id="KW-0157">Chromophore</keyword>
<keyword id="KW-0903">Direct protein sequencing</keyword>
<keyword id="KW-0600">Photoreceptor protein</keyword>
<keyword id="KW-0675">Receptor</keyword>
<keyword id="KW-0716">Sensory transduction</keyword>
<dbReference type="EMBL" id="U17017">
    <property type="protein sequence ID" value="AAA61735.1"/>
    <property type="molecule type" value="Genomic_DNA"/>
</dbReference>
<dbReference type="EMBL" id="X98887">
    <property type="protein sequence ID" value="CAA67391.1"/>
    <property type="molecule type" value="Genomic_DNA"/>
</dbReference>
<dbReference type="PIR" id="B55993">
    <property type="entry name" value="JC5446"/>
</dbReference>
<dbReference type="PDB" id="1D7E">
    <property type="method" value="X-ray"/>
    <property type="resolution" value="1.39 A"/>
    <property type="chains" value="A=4-125"/>
</dbReference>
<dbReference type="PDB" id="1F98">
    <property type="method" value="X-ray"/>
    <property type="resolution" value="1.15 A"/>
    <property type="chains" value="A=1-125"/>
</dbReference>
<dbReference type="PDB" id="1F9I">
    <property type="method" value="X-ray"/>
    <property type="resolution" value="1.10 A"/>
    <property type="chains" value="A=1-125"/>
</dbReference>
<dbReference type="PDB" id="1GSV">
    <property type="method" value="X-ray"/>
    <property type="resolution" value="1.75 A"/>
    <property type="chains" value="A=1-125"/>
</dbReference>
<dbReference type="PDB" id="1GSW">
    <property type="method" value="X-ray"/>
    <property type="resolution" value="1.85 A"/>
    <property type="chains" value="A=1-125"/>
</dbReference>
<dbReference type="PDB" id="1GSX">
    <property type="method" value="X-ray"/>
    <property type="resolution" value="1.79 A"/>
    <property type="chains" value="A=1-125"/>
</dbReference>
<dbReference type="PDB" id="1KOU">
    <property type="method" value="X-ray"/>
    <property type="resolution" value="1.16 A"/>
    <property type="chains" value="A=1-125"/>
</dbReference>
<dbReference type="PDB" id="1NWZ">
    <property type="method" value="X-ray"/>
    <property type="resolution" value="0.82 A"/>
    <property type="chains" value="A=1-125"/>
</dbReference>
<dbReference type="PDB" id="1ODV">
    <property type="method" value="X-ray"/>
    <property type="resolution" value="1.14 A"/>
    <property type="chains" value="A/B=26-125"/>
</dbReference>
<dbReference type="PDB" id="1OT6">
    <property type="method" value="X-ray"/>
    <property type="resolution" value="0.95 A"/>
    <property type="chains" value="A=1-125"/>
</dbReference>
<dbReference type="PDB" id="1OT9">
    <property type="method" value="X-ray"/>
    <property type="resolution" value="1.00 A"/>
    <property type="chains" value="A=1-125"/>
</dbReference>
<dbReference type="PDB" id="1OTA">
    <property type="method" value="X-ray"/>
    <property type="resolution" value="1.10 A"/>
    <property type="chains" value="A=1-125"/>
</dbReference>
<dbReference type="PDB" id="1OTB">
    <property type="method" value="X-ray"/>
    <property type="resolution" value="1.10 A"/>
    <property type="chains" value="A=1-125"/>
</dbReference>
<dbReference type="PDB" id="1OTD">
    <property type="method" value="X-ray"/>
    <property type="resolution" value="1.25 A"/>
    <property type="chains" value="A/B=1-125"/>
</dbReference>
<dbReference type="PDB" id="1OTE">
    <property type="method" value="X-ray"/>
    <property type="resolution" value="1.40 A"/>
    <property type="chains" value="A=1-125"/>
</dbReference>
<dbReference type="PDB" id="1OTI">
    <property type="method" value="X-ray"/>
    <property type="resolution" value="1.40 A"/>
    <property type="chains" value="A=1-125"/>
</dbReference>
<dbReference type="PDB" id="1S1Y">
    <property type="method" value="X-ray"/>
    <property type="resolution" value="1.60 A"/>
    <property type="chains" value="A=1-125"/>
</dbReference>
<dbReference type="PDB" id="1S1Z">
    <property type="method" value="X-ray"/>
    <property type="resolution" value="1.60 A"/>
    <property type="chains" value="A=1-125"/>
</dbReference>
<dbReference type="PDB" id="1S4R">
    <property type="method" value="X-ray"/>
    <property type="resolution" value="1.90 A"/>
    <property type="chains" value="A=1-125"/>
</dbReference>
<dbReference type="PDB" id="1S4S">
    <property type="method" value="X-ray"/>
    <property type="resolution" value="1.90 A"/>
    <property type="chains" value="A=1-125"/>
</dbReference>
<dbReference type="PDB" id="1T18">
    <property type="method" value="X-ray"/>
    <property type="resolution" value="1.60 A"/>
    <property type="chains" value="A=1-125"/>
</dbReference>
<dbReference type="PDB" id="1T19">
    <property type="method" value="X-ray"/>
    <property type="resolution" value="1.60 A"/>
    <property type="chains" value="A=1-125"/>
</dbReference>
<dbReference type="PDB" id="1T1A">
    <property type="method" value="X-ray"/>
    <property type="resolution" value="1.60 A"/>
    <property type="chains" value="A=1-125"/>
</dbReference>
<dbReference type="PDB" id="1T1B">
    <property type="method" value="X-ray"/>
    <property type="resolution" value="1.60 A"/>
    <property type="chains" value="A=1-125"/>
</dbReference>
<dbReference type="PDB" id="1T1C">
    <property type="method" value="X-ray"/>
    <property type="resolution" value="1.60 A"/>
    <property type="chains" value="A=1-125"/>
</dbReference>
<dbReference type="PDB" id="1TS0">
    <property type="method" value="X-ray"/>
    <property type="resolution" value="1.60 A"/>
    <property type="chains" value="A=1-125"/>
</dbReference>
<dbReference type="PDB" id="1TS6">
    <property type="method" value="X-ray"/>
    <property type="resolution" value="1.60 A"/>
    <property type="chains" value="A=1-125"/>
</dbReference>
<dbReference type="PDB" id="1TS7">
    <property type="method" value="X-ray"/>
    <property type="resolution" value="1.60 A"/>
    <property type="chains" value="A=1-125"/>
</dbReference>
<dbReference type="PDB" id="1TS8">
    <property type="method" value="X-ray"/>
    <property type="resolution" value="1.60 A"/>
    <property type="chains" value="A=1-125"/>
</dbReference>
<dbReference type="PDB" id="1UGU">
    <property type="method" value="X-ray"/>
    <property type="resolution" value="1.20 A"/>
    <property type="chains" value="A=1-125"/>
</dbReference>
<dbReference type="PDB" id="1UWN">
    <property type="method" value="X-ray"/>
    <property type="resolution" value="1.20 A"/>
    <property type="chains" value="X=1-125"/>
</dbReference>
<dbReference type="PDB" id="1UWP">
    <property type="method" value="X-ray"/>
    <property type="resolution" value="1.20 A"/>
    <property type="chains" value="X=1-125"/>
</dbReference>
<dbReference type="PDB" id="1XFN">
    <property type="method" value="NMR"/>
    <property type="chains" value="A=26-125"/>
</dbReference>
<dbReference type="PDB" id="1XFQ">
    <property type="method" value="NMR"/>
    <property type="chains" value="A=26-125"/>
</dbReference>
<dbReference type="PDB" id="2D01">
    <property type="method" value="X-ray"/>
    <property type="resolution" value="1.34 A"/>
    <property type="chains" value="A=1-125"/>
</dbReference>
<dbReference type="PDB" id="2D02">
    <property type="method" value="X-ray"/>
    <property type="resolution" value="1.42 A"/>
    <property type="chains" value="A=1-125"/>
</dbReference>
<dbReference type="PDB" id="2I9V">
    <property type="method" value="X-ray"/>
    <property type="resolution" value="2.20 A"/>
    <property type="chains" value="A=1-125"/>
</dbReference>
<dbReference type="PDB" id="2KX6">
    <property type="method" value="Other"/>
    <property type="chains" value="A=1-125"/>
</dbReference>
<dbReference type="PDB" id="2PHY">
    <property type="method" value="X-ray"/>
    <property type="resolution" value="1.40 A"/>
    <property type="chains" value="A=1-125"/>
</dbReference>
<dbReference type="PDB" id="2PYP">
    <property type="method" value="X-ray"/>
    <property type="resolution" value="1.90 A"/>
    <property type="chains" value="A=1-125"/>
</dbReference>
<dbReference type="PDB" id="2PYR">
    <property type="method" value="X-ray"/>
    <property type="resolution" value="1.90 A"/>
    <property type="chains" value="A=1-125"/>
</dbReference>
<dbReference type="PDB" id="2QJ5">
    <property type="method" value="X-ray"/>
    <property type="resolution" value="1.20 A"/>
    <property type="chains" value="A=1-125"/>
</dbReference>
<dbReference type="PDB" id="2QJ7">
    <property type="method" value="X-ray"/>
    <property type="resolution" value="1.05 A"/>
    <property type="chains" value="A=1-125"/>
</dbReference>
<dbReference type="PDB" id="2QWS">
    <property type="method" value="X-ray"/>
    <property type="resolution" value="2.50 A"/>
    <property type="chains" value="A=1-125"/>
</dbReference>
<dbReference type="PDB" id="2ZOH">
    <property type="method" value="X-ray"/>
    <property type="resolution" value="1.25 A"/>
    <property type="chains" value="A=1-125"/>
</dbReference>
<dbReference type="PDB" id="2ZOI">
    <property type="method" value="Neutron"/>
    <property type="resolution" value="1.50 A"/>
    <property type="chains" value="A=1-125"/>
</dbReference>
<dbReference type="PDB" id="3PHY">
    <property type="method" value="NMR"/>
    <property type="chains" value="A=1-125"/>
</dbReference>
<dbReference type="PDB" id="3PYP">
    <property type="method" value="X-ray"/>
    <property type="resolution" value="0.85 A"/>
    <property type="chains" value="A=1-125"/>
</dbReference>
<dbReference type="PDB" id="3UMD">
    <property type="method" value="X-ray"/>
    <property type="resolution" value="1.80 A"/>
    <property type="chains" value="A=1-125"/>
</dbReference>
<dbReference type="PDB" id="3UME">
    <property type="method" value="X-ray"/>
    <property type="resolution" value="1.80 A"/>
    <property type="chains" value="A=1-125"/>
</dbReference>
<dbReference type="PDB" id="3VE3">
    <property type="method" value="X-ray"/>
    <property type="resolution" value="1.60 A"/>
    <property type="chains" value="A=1-125"/>
</dbReference>
<dbReference type="PDB" id="3VE4">
    <property type="method" value="X-ray"/>
    <property type="resolution" value="1.60 A"/>
    <property type="chains" value="A=1-125"/>
</dbReference>
<dbReference type="PDB" id="4B9O">
    <property type="method" value="X-ray"/>
    <property type="resolution" value="1.60 A"/>
    <property type="chains" value="A=1-125"/>
</dbReference>
<dbReference type="PDB" id="4BBT">
    <property type="method" value="X-ray"/>
    <property type="resolution" value="1.60 A"/>
    <property type="chains" value="A=1-125"/>
</dbReference>
<dbReference type="PDB" id="4BBU">
    <property type="method" value="X-ray"/>
    <property type="resolution" value="1.60 A"/>
    <property type="chains" value="A=1-125"/>
</dbReference>
<dbReference type="PDB" id="4BBV">
    <property type="method" value="X-ray"/>
    <property type="resolution" value="1.60 A"/>
    <property type="chains" value="A=1-125"/>
</dbReference>
<dbReference type="PDB" id="4HY8">
    <property type="method" value="X-ray"/>
    <property type="resolution" value="1.60 A"/>
    <property type="chains" value="A=1-125"/>
</dbReference>
<dbReference type="PDB" id="4I38">
    <property type="method" value="X-ray"/>
    <property type="resolution" value="1.60 A"/>
    <property type="chains" value="A=1-125"/>
</dbReference>
<dbReference type="PDB" id="4I39">
    <property type="method" value="X-ray"/>
    <property type="resolution" value="1.60 A"/>
    <property type="chains" value="A=1-125"/>
</dbReference>
<dbReference type="PDB" id="4I3A">
    <property type="method" value="X-ray"/>
    <property type="resolution" value="1.60 A"/>
    <property type="chains" value="A=1-125"/>
</dbReference>
<dbReference type="PDB" id="4I3I">
    <property type="method" value="X-ray"/>
    <property type="resolution" value="1.60 A"/>
    <property type="chains" value="A=1-125"/>
</dbReference>
<dbReference type="PDB" id="4I3J">
    <property type="method" value="X-ray"/>
    <property type="resolution" value="1.60 A"/>
    <property type="chains" value="A=1-125"/>
</dbReference>
<dbReference type="PDB" id="4WL9">
    <property type="method" value="X-ray"/>
    <property type="resolution" value="1.60 A"/>
    <property type="chains" value="A=1-125"/>
</dbReference>
<dbReference type="PDB" id="4WLA">
    <property type="method" value="X-ray"/>
    <property type="resolution" value="1.60 A"/>
    <property type="chains" value="A=1-125"/>
</dbReference>
<dbReference type="PDB" id="5GX9">
    <property type="method" value="Neutron"/>
    <property type="resolution" value="1.49 A"/>
    <property type="chains" value="A=1-125"/>
</dbReference>
<dbReference type="PDB" id="5HD3">
    <property type="method" value="X-ray"/>
    <property type="resolution" value="1.60 A"/>
    <property type="chains" value="A=1-125"/>
</dbReference>
<dbReference type="PDB" id="5HD5">
    <property type="method" value="X-ray"/>
    <property type="resolution" value="1.60 A"/>
    <property type="chains" value="A=1-125"/>
</dbReference>
<dbReference type="PDB" id="5HDC">
    <property type="method" value="X-ray"/>
    <property type="resolution" value="1.60 A"/>
    <property type="chains" value="A=1-125"/>
</dbReference>
<dbReference type="PDB" id="5HDD">
    <property type="method" value="X-ray"/>
    <property type="resolution" value="1.60 A"/>
    <property type="chains" value="A=1-125"/>
</dbReference>
<dbReference type="PDB" id="5HDS">
    <property type="method" value="X-ray"/>
    <property type="resolution" value="1.60 A"/>
    <property type="chains" value="A=1-125"/>
</dbReference>
<dbReference type="PDB" id="6MHI">
    <property type="method" value="X-ray"/>
    <property type="resolution" value="1.35 A"/>
    <property type="chains" value="A=1-125"/>
</dbReference>
<dbReference type="PDB" id="6MHN">
    <property type="method" value="X-ray"/>
    <property type="resolution" value="1.67 A"/>
    <property type="chains" value="A=1-125"/>
</dbReference>
<dbReference type="PDB" id="6MKT">
    <property type="method" value="X-ray"/>
    <property type="resolution" value="1.60 A"/>
    <property type="chains" value="A=1-125"/>
</dbReference>
<dbReference type="PDB" id="6MMD">
    <property type="method" value="X-ray"/>
    <property type="resolution" value="1.23 A"/>
    <property type="chains" value="A/B=1-125"/>
</dbReference>
<dbReference type="PDB" id="6P4I">
    <property type="method" value="X-ray"/>
    <property type="resolution" value="1.60 A"/>
    <property type="chains" value="A=1-125"/>
</dbReference>
<dbReference type="PDB" id="6P5D">
    <property type="method" value="X-ray"/>
    <property type="resolution" value="1.60 A"/>
    <property type="chains" value="A=1-125"/>
</dbReference>
<dbReference type="PDB" id="6P5E">
    <property type="method" value="X-ray"/>
    <property type="resolution" value="1.60 A"/>
    <property type="chains" value="A=1-125"/>
</dbReference>
<dbReference type="PDB" id="6P5F">
    <property type="method" value="X-ray"/>
    <property type="resolution" value="1.70 A"/>
    <property type="chains" value="A=1-125"/>
</dbReference>
<dbReference type="PDB" id="6P5G">
    <property type="method" value="X-ray"/>
    <property type="resolution" value="1.60 A"/>
    <property type="chains" value="A=1-125"/>
</dbReference>
<dbReference type="PDB" id="6UMY">
    <property type="method" value="X-ray"/>
    <property type="resolution" value="0.92 A"/>
    <property type="chains" value="A=1-125"/>
</dbReference>
<dbReference type="PDB" id="6UMZ">
    <property type="method" value="X-ray"/>
    <property type="resolution" value="0.90 A"/>
    <property type="chains" value="A=1-125"/>
</dbReference>
<dbReference type="PDB" id="6UN0">
    <property type="method" value="X-ray"/>
    <property type="resolution" value="0.85 A"/>
    <property type="chains" value="A=1-125"/>
</dbReference>
<dbReference type="PDB" id="6UN2">
    <property type="method" value="X-ray"/>
    <property type="resolution" value="0.97 A"/>
    <property type="chains" value="A=1-125"/>
</dbReference>
<dbReference type="PDB" id="7AV6">
    <property type="method" value="X-ray"/>
    <property type="resolution" value="1.50 A"/>
    <property type="chains" value="A=1-125"/>
</dbReference>
<dbReference type="PDB" id="7SJJ">
    <property type="method" value="X-ray"/>
    <property type="resolution" value="0.95 A"/>
    <property type="chains" value="A=1-125"/>
</dbReference>
<dbReference type="PDB" id="7SPV">
    <property type="method" value="X-ray"/>
    <property type="resolution" value="1.18 A"/>
    <property type="chains" value="A=1-125"/>
</dbReference>
<dbReference type="PDB" id="7SPW">
    <property type="method" value="X-ray"/>
    <property type="resolution" value="1.05 A"/>
    <property type="chains" value="A=1-125"/>
</dbReference>
<dbReference type="PDB" id="7SPX">
    <property type="method" value="X-ray"/>
    <property type="resolution" value="0.97 A"/>
    <property type="chains" value="A=1-125"/>
</dbReference>
<dbReference type="PDB" id="8AO0">
    <property type="method" value="NMR"/>
    <property type="chains" value="A=28-125"/>
</dbReference>
<dbReference type="PDB" id="8AO1">
    <property type="method" value="NMR"/>
    <property type="chains" value="A=28-125"/>
</dbReference>
<dbReference type="PDB" id="8DZU">
    <property type="method" value="X-ray"/>
    <property type="resolution" value="1.04 A"/>
    <property type="chains" value="A=1-125"/>
</dbReference>
<dbReference type="PDB" id="8DZX">
    <property type="method" value="X-ray"/>
    <property type="resolution" value="1.14 A"/>
    <property type="chains" value="A=1-125"/>
</dbReference>
<dbReference type="PDB" id="8DZY">
    <property type="method" value="X-ray"/>
    <property type="resolution" value="1.01 A"/>
    <property type="chains" value="A=1-125"/>
</dbReference>
<dbReference type="PDB" id="8E02">
    <property type="method" value="X-ray"/>
    <property type="resolution" value="1.09 A"/>
    <property type="chains" value="A=1-125"/>
</dbReference>
<dbReference type="PDB" id="8E03">
    <property type="method" value="X-ray"/>
    <property type="resolution" value="1.24 A"/>
    <property type="chains" value="A=1-125"/>
</dbReference>
<dbReference type="PDB" id="8E09">
    <property type="method" value="X-ray"/>
    <property type="resolution" value="1.01 A"/>
    <property type="chains" value="A=1-125"/>
</dbReference>
<dbReference type="PDB" id="8E1K">
    <property type="method" value="X-ray"/>
    <property type="resolution" value="1.02 A"/>
    <property type="chains" value="A=1-125"/>
</dbReference>
<dbReference type="PDB" id="8E1L">
    <property type="method" value="X-ray"/>
    <property type="resolution" value="1.20 A"/>
    <property type="chains" value="A=1-125"/>
</dbReference>
<dbReference type="PDB" id="9AZ7">
    <property type="method" value="X-ray"/>
    <property type="resolution" value="2.00 A"/>
    <property type="chains" value="A=1-125"/>
</dbReference>
<dbReference type="PDB" id="9AZ9">
    <property type="method" value="X-ray"/>
    <property type="resolution" value="2.00 A"/>
    <property type="chains" value="A=1-125"/>
</dbReference>
<dbReference type="PDB" id="9D10">
    <property type="method" value="X-ray"/>
    <property type="resolution" value="1.80 A"/>
    <property type="chains" value="A=1-125"/>
</dbReference>
<dbReference type="PDBsum" id="1D7E"/>
<dbReference type="PDBsum" id="1F98"/>
<dbReference type="PDBsum" id="1F9I"/>
<dbReference type="PDBsum" id="1GSV"/>
<dbReference type="PDBsum" id="1GSW"/>
<dbReference type="PDBsum" id="1GSX"/>
<dbReference type="PDBsum" id="1KOU"/>
<dbReference type="PDBsum" id="1NWZ"/>
<dbReference type="PDBsum" id="1ODV"/>
<dbReference type="PDBsum" id="1OT6"/>
<dbReference type="PDBsum" id="1OT9"/>
<dbReference type="PDBsum" id="1OTA"/>
<dbReference type="PDBsum" id="1OTB"/>
<dbReference type="PDBsum" id="1OTD"/>
<dbReference type="PDBsum" id="1OTE"/>
<dbReference type="PDBsum" id="1OTI"/>
<dbReference type="PDBsum" id="1S1Y"/>
<dbReference type="PDBsum" id="1S1Z"/>
<dbReference type="PDBsum" id="1S4R"/>
<dbReference type="PDBsum" id="1S4S"/>
<dbReference type="PDBsum" id="1T18"/>
<dbReference type="PDBsum" id="1T19"/>
<dbReference type="PDBsum" id="1T1A"/>
<dbReference type="PDBsum" id="1T1B"/>
<dbReference type="PDBsum" id="1T1C"/>
<dbReference type="PDBsum" id="1TS0"/>
<dbReference type="PDBsum" id="1TS6"/>
<dbReference type="PDBsum" id="1TS7"/>
<dbReference type="PDBsum" id="1TS8"/>
<dbReference type="PDBsum" id="1UGU"/>
<dbReference type="PDBsum" id="1UWN"/>
<dbReference type="PDBsum" id="1UWP"/>
<dbReference type="PDBsum" id="1XFN"/>
<dbReference type="PDBsum" id="1XFQ"/>
<dbReference type="PDBsum" id="2D01"/>
<dbReference type="PDBsum" id="2D02"/>
<dbReference type="PDBsum" id="2I9V"/>
<dbReference type="PDBsum" id="2KX6"/>
<dbReference type="PDBsum" id="2PHY"/>
<dbReference type="PDBsum" id="2PYP"/>
<dbReference type="PDBsum" id="2PYR"/>
<dbReference type="PDBsum" id="2QJ5"/>
<dbReference type="PDBsum" id="2QJ7"/>
<dbReference type="PDBsum" id="2QWS"/>
<dbReference type="PDBsum" id="2ZOH"/>
<dbReference type="PDBsum" id="2ZOI"/>
<dbReference type="PDBsum" id="3PHY"/>
<dbReference type="PDBsum" id="3PYP"/>
<dbReference type="PDBsum" id="3UMD"/>
<dbReference type="PDBsum" id="3UME"/>
<dbReference type="PDBsum" id="3VE3"/>
<dbReference type="PDBsum" id="3VE4"/>
<dbReference type="PDBsum" id="4B9O"/>
<dbReference type="PDBsum" id="4BBT"/>
<dbReference type="PDBsum" id="4BBU"/>
<dbReference type="PDBsum" id="4BBV"/>
<dbReference type="PDBsum" id="4HY8"/>
<dbReference type="PDBsum" id="4I38"/>
<dbReference type="PDBsum" id="4I39"/>
<dbReference type="PDBsum" id="4I3A"/>
<dbReference type="PDBsum" id="4I3I"/>
<dbReference type="PDBsum" id="4I3J"/>
<dbReference type="PDBsum" id="4WL9"/>
<dbReference type="PDBsum" id="4WLA"/>
<dbReference type="PDBsum" id="5GX9"/>
<dbReference type="PDBsum" id="5HD3"/>
<dbReference type="PDBsum" id="5HD5"/>
<dbReference type="PDBsum" id="5HDC"/>
<dbReference type="PDBsum" id="5HDD"/>
<dbReference type="PDBsum" id="5HDS"/>
<dbReference type="PDBsum" id="6MHI"/>
<dbReference type="PDBsum" id="6MHN"/>
<dbReference type="PDBsum" id="6MKT"/>
<dbReference type="PDBsum" id="6MMD"/>
<dbReference type="PDBsum" id="6P4I"/>
<dbReference type="PDBsum" id="6P5D"/>
<dbReference type="PDBsum" id="6P5E"/>
<dbReference type="PDBsum" id="6P5F"/>
<dbReference type="PDBsum" id="6P5G"/>
<dbReference type="PDBsum" id="6UMY"/>
<dbReference type="PDBsum" id="6UMZ"/>
<dbReference type="PDBsum" id="6UN0"/>
<dbReference type="PDBsum" id="6UN2"/>
<dbReference type="PDBsum" id="7AV6"/>
<dbReference type="PDBsum" id="7SJJ"/>
<dbReference type="PDBsum" id="7SPV"/>
<dbReference type="PDBsum" id="7SPW"/>
<dbReference type="PDBsum" id="7SPX"/>
<dbReference type="PDBsum" id="8AO0"/>
<dbReference type="PDBsum" id="8AO1"/>
<dbReference type="PDBsum" id="8DZU"/>
<dbReference type="PDBsum" id="8DZX"/>
<dbReference type="PDBsum" id="8DZY"/>
<dbReference type="PDBsum" id="8E02"/>
<dbReference type="PDBsum" id="8E03"/>
<dbReference type="PDBsum" id="8E09"/>
<dbReference type="PDBsum" id="8E1K"/>
<dbReference type="PDBsum" id="8E1L"/>
<dbReference type="PDBsum" id="9AZ7"/>
<dbReference type="PDBsum" id="9AZ9"/>
<dbReference type="PDBsum" id="9D10"/>
<dbReference type="BMRB" id="P16113"/>
<dbReference type="SMR" id="P16113"/>
<dbReference type="DIP" id="DIP-61234N"/>
<dbReference type="DrugBank" id="DB01880">
    <property type="generic name" value="3,4-Dihydroxycinnamic Acid"/>
</dbReference>
<dbReference type="DrugBank" id="DB04066">
    <property type="generic name" value="p-Coumaric acid"/>
</dbReference>
<dbReference type="EvolutionaryTrace" id="P16113"/>
<dbReference type="GO" id="GO:0042802">
    <property type="term" value="F:identical protein binding"/>
    <property type="evidence" value="ECO:0000353"/>
    <property type="project" value="IntAct"/>
</dbReference>
<dbReference type="GO" id="GO:0009881">
    <property type="term" value="F:photoreceptor activity"/>
    <property type="evidence" value="ECO:0007669"/>
    <property type="project" value="UniProtKB-KW"/>
</dbReference>
<dbReference type="GO" id="GO:0007602">
    <property type="term" value="P:phototransduction"/>
    <property type="evidence" value="ECO:0007669"/>
    <property type="project" value="InterPro"/>
</dbReference>
<dbReference type="GO" id="GO:0006355">
    <property type="term" value="P:regulation of DNA-templated transcription"/>
    <property type="evidence" value="ECO:0007669"/>
    <property type="project" value="InterPro"/>
</dbReference>
<dbReference type="CDD" id="cd00130">
    <property type="entry name" value="PAS"/>
    <property type="match status" value="1"/>
</dbReference>
<dbReference type="FunFam" id="3.30.450.20:FF:000437">
    <property type="entry name" value="Photoactive yellow protein"/>
    <property type="match status" value="1"/>
</dbReference>
<dbReference type="Gene3D" id="3.30.450.20">
    <property type="entry name" value="PAS domain"/>
    <property type="match status" value="1"/>
</dbReference>
<dbReference type="InterPro" id="IPR000014">
    <property type="entry name" value="PAS"/>
</dbReference>
<dbReference type="InterPro" id="IPR035965">
    <property type="entry name" value="PAS-like_dom_sf"/>
</dbReference>
<dbReference type="InterPro" id="IPR013767">
    <property type="entry name" value="PAS_fold"/>
</dbReference>
<dbReference type="InterPro" id="IPR012130">
    <property type="entry name" value="PYP"/>
</dbReference>
<dbReference type="NCBIfam" id="TIGR02373">
    <property type="entry name" value="photo_yellow"/>
    <property type="match status" value="1"/>
</dbReference>
<dbReference type="Pfam" id="PF00989">
    <property type="entry name" value="PAS"/>
    <property type="match status" value="1"/>
</dbReference>
<dbReference type="PIRSF" id="PIRSF000087">
    <property type="entry name" value="PYP"/>
    <property type="match status" value="1"/>
</dbReference>
<dbReference type="SMART" id="SM00091">
    <property type="entry name" value="PAS"/>
    <property type="match status" value="1"/>
</dbReference>
<dbReference type="SUPFAM" id="SSF55785">
    <property type="entry name" value="PYP-like sensor domain (PAS domain)"/>
    <property type="match status" value="1"/>
</dbReference>
<dbReference type="PROSITE" id="PS50112">
    <property type="entry name" value="PAS"/>
    <property type="match status" value="1"/>
</dbReference>
<gene>
    <name type="primary">pyp</name>
</gene>
<feature type="chain" id="PRO_0000144914" description="Photoactive yellow protein">
    <location>
        <begin position="1"/>
        <end position="125"/>
    </location>
</feature>
<feature type="domain" description="PAS" evidence="1">
    <location>
        <begin position="23"/>
        <end position="86"/>
    </location>
</feature>
<feature type="modified residue" description="S-(4-hydroxycinnamyl)cysteine" evidence="2">
    <location>
        <position position="69"/>
    </location>
</feature>
<feature type="sequence conflict" description="In Ref. 3; AA sequence." evidence="3" ref="3">
    <original>Q</original>
    <variation>E</variation>
    <location>
        <position position="56"/>
    </location>
</feature>
<feature type="turn" evidence="6">
    <location>
        <begin position="8"/>
        <end position="10"/>
    </location>
</feature>
<feature type="helix" evidence="4">
    <location>
        <begin position="11"/>
        <end position="14"/>
    </location>
</feature>
<feature type="turn" evidence="4">
    <location>
        <begin position="15"/>
        <end position="17"/>
    </location>
</feature>
<feature type="helix" evidence="4">
    <location>
        <begin position="20"/>
        <end position="23"/>
    </location>
</feature>
<feature type="strand" evidence="4">
    <location>
        <begin position="27"/>
        <end position="34"/>
    </location>
</feature>
<feature type="turn" evidence="6">
    <location>
        <begin position="35"/>
        <end position="37"/>
    </location>
</feature>
<feature type="strand" evidence="4">
    <location>
        <begin position="38"/>
        <end position="42"/>
    </location>
</feature>
<feature type="helix" evidence="4">
    <location>
        <begin position="44"/>
        <end position="50"/>
    </location>
</feature>
<feature type="helix" evidence="4">
    <location>
        <begin position="54"/>
        <end position="57"/>
    </location>
</feature>
<feature type="helix" evidence="4">
    <location>
        <begin position="62"/>
        <end position="66"/>
    </location>
</feature>
<feature type="helix" evidence="4">
    <location>
        <begin position="68"/>
        <end position="70"/>
    </location>
</feature>
<feature type="turn" evidence="4">
    <location>
        <begin position="73"/>
        <end position="75"/>
    </location>
</feature>
<feature type="helix" evidence="4">
    <location>
        <begin position="76"/>
        <end position="85"/>
    </location>
</feature>
<feature type="strand" evidence="4">
    <location>
        <begin position="89"/>
        <end position="96"/>
    </location>
</feature>
<feature type="strand" evidence="5">
    <location>
        <begin position="98"/>
        <end position="100"/>
    </location>
</feature>
<feature type="strand" evidence="4">
    <location>
        <begin position="103"/>
        <end position="111"/>
    </location>
</feature>
<feature type="strand" evidence="4">
    <location>
        <begin position="113"/>
        <end position="124"/>
    </location>
</feature>
<evidence type="ECO:0000255" key="1">
    <source>
        <dbReference type="PROSITE-ProRule" id="PRU00140"/>
    </source>
</evidence>
<evidence type="ECO:0000269" key="2">
    <source>
    </source>
</evidence>
<evidence type="ECO:0000305" key="3"/>
<evidence type="ECO:0007829" key="4">
    <source>
        <dbReference type="PDB" id="1NWZ"/>
    </source>
</evidence>
<evidence type="ECO:0007829" key="5">
    <source>
        <dbReference type="PDB" id="1OT6"/>
    </source>
</evidence>
<evidence type="ECO:0007829" key="6">
    <source>
        <dbReference type="PDB" id="3PHY"/>
    </source>
</evidence>
<accession>P16113</accession>
<protein>
    <recommendedName>
        <fullName>Photoactive yellow protein</fullName>
        <shortName>PYP</shortName>
    </recommendedName>
</protein>
<name>PYP_HALHA</name>
<sequence length="125" mass="13874">MEHVAFGSEDIENTLAKMDDGQLDGLAFGAIQLDGDGNILQYNAAEGDITGRDPKQVIGKNFFKDVAPCTDSPEFYGKFKEGVASGNLNTMFEYTFDYQMTPTKVKVHMKKALSGDSYWVFVKRV</sequence>
<proteinExistence type="evidence at protein level"/>
<reference key="1">
    <citation type="journal article" date="1994" name="Biochemistry">
        <title>Complete chemical structure of photoactive yellow protein: novel thioester-linked 4-hydroxycinnamyl chromophore and photocycle chemistry.</title>
        <authorList>
            <person name="Baca M."/>
            <person name="Borgstahl G.E."/>
            <person name="Boissinot M."/>
            <person name="Burke P.M."/>
            <person name="Williams D.R."/>
            <person name="Slater K.A."/>
            <person name="Getzoff E.D."/>
        </authorList>
    </citation>
    <scope>NUCLEOTIDE SEQUENCE [GENOMIC DNA]</scope>
    <scope>CHROMOPHORE</scope>
    <source>
        <strain>BN9626</strain>
    </source>
</reference>
<reference key="2">
    <citation type="journal article" date="1996" name="EMBO J.">
        <title>The xanthopsins: a new family of eubacterial blue-light photoreceptors.</title>
        <authorList>
            <person name="Kort R."/>
            <person name="Hoff W.D."/>
            <person name="van West M."/>
            <person name="Kroon A.R."/>
            <person name="Hoffer S.M."/>
            <person name="Vlieg K.H."/>
            <person name="Crielaard W."/>
            <person name="van Beeumen J.J."/>
            <person name="Hellingwerf K.J."/>
        </authorList>
    </citation>
    <scope>NUCLEOTIDE SEQUENCE [GENOMIC DNA]</scope>
    <source>
        <strain>BN9626</strain>
    </source>
</reference>
<reference key="3">
    <citation type="journal article" date="1993" name="Protein Sci.">
        <title>Primary structure of a photoactive yellow protein from the phototrophic bacterium Ectothiorhodospira halophila, with evidence for the mass and the binding site of the chromophore.</title>
        <authorList>
            <person name="van Beeumen J.J."/>
            <person name="Devreese B.V."/>
            <person name="van Bun S.M."/>
            <person name="Hoff W.D."/>
            <person name="Hellingwerf K.J."/>
            <person name="Meyer T.E."/>
            <person name="McRee D.E."/>
            <person name="Cusanovich M.A."/>
        </authorList>
    </citation>
    <scope>PROTEIN SEQUENCE</scope>
</reference>
<reference key="4">
    <citation type="journal article" date="1996" name="Biochemistry">
        <title>Chemical reactivity and spectroscopy of the thiol ester-linked p-coumaric acid chromophore in the photoactive yellow protein from Ectothiorhodospira halophila.</title>
        <authorList>
            <person name="Hoff W.D."/>
            <person name="Devreese B."/>
            <person name="Fokkens R."/>
            <person name="Nugteren-Roodzant I.M."/>
            <person name="Van Beeumen J."/>
            <person name="Nibbering N."/>
            <person name="Hellingwerf K.J."/>
        </authorList>
    </citation>
    <scope>CHROMOPHORE</scope>
</reference>
<reference key="5">
    <citation type="journal article" date="1989" name="Proc. Natl. Acad. Sci. U.S.A.">
        <title>Crystallographic structure of a photoreceptor protein at 2.4-A resolution.</title>
        <authorList>
            <person name="McRee D.E."/>
            <person name="Tainer J.A."/>
            <person name="Meyer T.E."/>
            <person name="van Beeumen J."/>
            <person name="Cusanovich M.A."/>
            <person name="Getzoff E.D."/>
        </authorList>
    </citation>
    <scope>X-RAY CRYSTALLOGRAPHY (2.4 ANGSTROMS)</scope>
    <source>
        <strain>BN9626</strain>
    </source>
</reference>
<reference key="6">
    <citation type="journal article" date="1997" name="Science">
        <title>Structure of a protein photocycle intermediate by millisecond time-resolved crystallography.</title>
        <authorList>
            <person name="Genick U.K."/>
            <person name="Borgstahl G.E."/>
            <person name="Ng K."/>
            <person name="Ren Z."/>
            <person name="Pradervand C."/>
            <person name="Burke P.M."/>
            <person name="Srajer V."/>
            <person name="Teng T.Y."/>
            <person name="Schildkamp W."/>
            <person name="McRee D.E."/>
            <person name="Moffat K."/>
            <person name="Getzoff E.D."/>
        </authorList>
    </citation>
    <scope>X-RAY CRYSTALLOGRAPHY (1.9 ANGSTROMS)</scope>
    <source>
        <strain>BN9626</strain>
    </source>
</reference>
<reference key="7">
    <citation type="journal article" date="1998" name="Nature">
        <title>Structure at 0.85-A resolution of an early protein photocycle intermediate.</title>
        <authorList>
            <person name="Genick U.K."/>
            <person name="Soltis M."/>
            <person name="Kuhn P."/>
            <person name="Canestrelli I.L."/>
            <person name="Getzoff E.D."/>
        </authorList>
    </citation>
    <scope>X-RAY CRYSTALLOGRAPHY (0.85 ANGSTROMS)</scope>
    <source>
        <strain>BN9626</strain>
    </source>
</reference>
<reference key="8">
    <citation type="journal article" date="2000" name="Protein Sci.">
        <title>Conformational substates in different crystal forms of the photoactive yellow protein -- correlation with theoretical and experimental flexibility.</title>
        <authorList>
            <person name="van Aalten D.M."/>
            <person name="Crielaard W."/>
            <person name="Hellingwerf K.J."/>
            <person name="Joshua-Tor L."/>
        </authorList>
    </citation>
    <scope>X-RAY CRYSTALLOGRAPHY (1.39 ANGSTROMS)</scope>
</reference>
<reference key="9">
    <citation type="journal article" date="1998" name="Nat. Struct. Biol.">
        <title>Structural and dynamic changes of photoactive yellow protein during its photocycle in solution.</title>
        <authorList>
            <person name="Rubinstenn G."/>
            <person name="Vuister G.W."/>
            <person name="Mulder F.A."/>
            <person name="Dux P.E."/>
            <person name="Boelens R."/>
            <person name="Hellingwerf K.J."/>
            <person name="Kaptein R."/>
        </authorList>
    </citation>
    <scope>STRUCTURE BY NMR</scope>
</reference>
<comment type="function">
    <text>Photoactive blue light protein. Probably functions as a photoreceptor for a negative phototaxis response.</text>
</comment>
<comment type="subunit">
    <text>Monomer.</text>
</comment>
<comment type="interaction">
    <interactant intactId="EBI-15592191">
        <id>P16113</id>
    </interactant>
    <interactant intactId="EBI-15592191">
        <id>P16113</id>
        <label>pyp</label>
    </interactant>
    <organismsDiffer>false</organismsDiffer>
    <experiments>4</experiments>
</comment>
<comment type="PTM">
    <text>The 4-hydroxycinnamic acid (p-coumaric acid) chromophore is covalently bound via a thioester linkage.</text>
</comment>
<comment type="similarity">
    <text evidence="3">Belongs to the photoactive yellow protein family.</text>
</comment>
<organism>
    <name type="scientific">Halorhodospira halophila</name>
    <name type="common">Ectothiorhodospira halophila</name>
    <dbReference type="NCBI Taxonomy" id="1053"/>
    <lineage>
        <taxon>Bacteria</taxon>
        <taxon>Pseudomonadati</taxon>
        <taxon>Pseudomonadota</taxon>
        <taxon>Gammaproteobacteria</taxon>
        <taxon>Chromatiales</taxon>
        <taxon>Ectothiorhodospiraceae</taxon>
        <taxon>Halorhodospira</taxon>
    </lineage>
</organism>